<protein>
    <recommendedName>
        <fullName>Protein FAM163A</fullName>
    </recommendedName>
</protein>
<reference key="1">
    <citation type="journal article" date="2005" name="Science">
        <title>The transcriptional landscape of the mammalian genome.</title>
        <authorList>
            <person name="Carninci P."/>
            <person name="Kasukawa T."/>
            <person name="Katayama S."/>
            <person name="Gough J."/>
            <person name="Frith M.C."/>
            <person name="Maeda N."/>
            <person name="Oyama R."/>
            <person name="Ravasi T."/>
            <person name="Lenhard B."/>
            <person name="Wells C."/>
            <person name="Kodzius R."/>
            <person name="Shimokawa K."/>
            <person name="Bajic V.B."/>
            <person name="Brenner S.E."/>
            <person name="Batalov S."/>
            <person name="Forrest A.R."/>
            <person name="Zavolan M."/>
            <person name="Davis M.J."/>
            <person name="Wilming L.G."/>
            <person name="Aidinis V."/>
            <person name="Allen J.E."/>
            <person name="Ambesi-Impiombato A."/>
            <person name="Apweiler R."/>
            <person name="Aturaliya R.N."/>
            <person name="Bailey T.L."/>
            <person name="Bansal M."/>
            <person name="Baxter L."/>
            <person name="Beisel K.W."/>
            <person name="Bersano T."/>
            <person name="Bono H."/>
            <person name="Chalk A.M."/>
            <person name="Chiu K.P."/>
            <person name="Choudhary V."/>
            <person name="Christoffels A."/>
            <person name="Clutterbuck D.R."/>
            <person name="Crowe M.L."/>
            <person name="Dalla E."/>
            <person name="Dalrymple B.P."/>
            <person name="de Bono B."/>
            <person name="Della Gatta G."/>
            <person name="di Bernardo D."/>
            <person name="Down T."/>
            <person name="Engstrom P."/>
            <person name="Fagiolini M."/>
            <person name="Faulkner G."/>
            <person name="Fletcher C.F."/>
            <person name="Fukushima T."/>
            <person name="Furuno M."/>
            <person name="Futaki S."/>
            <person name="Gariboldi M."/>
            <person name="Georgii-Hemming P."/>
            <person name="Gingeras T.R."/>
            <person name="Gojobori T."/>
            <person name="Green R.E."/>
            <person name="Gustincich S."/>
            <person name="Harbers M."/>
            <person name="Hayashi Y."/>
            <person name="Hensch T.K."/>
            <person name="Hirokawa N."/>
            <person name="Hill D."/>
            <person name="Huminiecki L."/>
            <person name="Iacono M."/>
            <person name="Ikeo K."/>
            <person name="Iwama A."/>
            <person name="Ishikawa T."/>
            <person name="Jakt M."/>
            <person name="Kanapin A."/>
            <person name="Katoh M."/>
            <person name="Kawasawa Y."/>
            <person name="Kelso J."/>
            <person name="Kitamura H."/>
            <person name="Kitano H."/>
            <person name="Kollias G."/>
            <person name="Krishnan S.P."/>
            <person name="Kruger A."/>
            <person name="Kummerfeld S.K."/>
            <person name="Kurochkin I.V."/>
            <person name="Lareau L.F."/>
            <person name="Lazarevic D."/>
            <person name="Lipovich L."/>
            <person name="Liu J."/>
            <person name="Liuni S."/>
            <person name="McWilliam S."/>
            <person name="Madan Babu M."/>
            <person name="Madera M."/>
            <person name="Marchionni L."/>
            <person name="Matsuda H."/>
            <person name="Matsuzawa S."/>
            <person name="Miki H."/>
            <person name="Mignone F."/>
            <person name="Miyake S."/>
            <person name="Morris K."/>
            <person name="Mottagui-Tabar S."/>
            <person name="Mulder N."/>
            <person name="Nakano N."/>
            <person name="Nakauchi H."/>
            <person name="Ng P."/>
            <person name="Nilsson R."/>
            <person name="Nishiguchi S."/>
            <person name="Nishikawa S."/>
            <person name="Nori F."/>
            <person name="Ohara O."/>
            <person name="Okazaki Y."/>
            <person name="Orlando V."/>
            <person name="Pang K.C."/>
            <person name="Pavan W.J."/>
            <person name="Pavesi G."/>
            <person name="Pesole G."/>
            <person name="Petrovsky N."/>
            <person name="Piazza S."/>
            <person name="Reed J."/>
            <person name="Reid J.F."/>
            <person name="Ring B.Z."/>
            <person name="Ringwald M."/>
            <person name="Rost B."/>
            <person name="Ruan Y."/>
            <person name="Salzberg S.L."/>
            <person name="Sandelin A."/>
            <person name="Schneider C."/>
            <person name="Schoenbach C."/>
            <person name="Sekiguchi K."/>
            <person name="Semple C.A."/>
            <person name="Seno S."/>
            <person name="Sessa L."/>
            <person name="Sheng Y."/>
            <person name="Shibata Y."/>
            <person name="Shimada H."/>
            <person name="Shimada K."/>
            <person name="Silva D."/>
            <person name="Sinclair B."/>
            <person name="Sperling S."/>
            <person name="Stupka E."/>
            <person name="Sugiura K."/>
            <person name="Sultana R."/>
            <person name="Takenaka Y."/>
            <person name="Taki K."/>
            <person name="Tammoja K."/>
            <person name="Tan S.L."/>
            <person name="Tang S."/>
            <person name="Taylor M.S."/>
            <person name="Tegner J."/>
            <person name="Teichmann S.A."/>
            <person name="Ueda H.R."/>
            <person name="van Nimwegen E."/>
            <person name="Verardo R."/>
            <person name="Wei C.L."/>
            <person name="Yagi K."/>
            <person name="Yamanishi H."/>
            <person name="Zabarovsky E."/>
            <person name="Zhu S."/>
            <person name="Zimmer A."/>
            <person name="Hide W."/>
            <person name="Bult C."/>
            <person name="Grimmond S.M."/>
            <person name="Teasdale R.D."/>
            <person name="Liu E.T."/>
            <person name="Brusic V."/>
            <person name="Quackenbush J."/>
            <person name="Wahlestedt C."/>
            <person name="Mattick J.S."/>
            <person name="Hume D.A."/>
            <person name="Kai C."/>
            <person name="Sasaki D."/>
            <person name="Tomaru Y."/>
            <person name="Fukuda S."/>
            <person name="Kanamori-Katayama M."/>
            <person name="Suzuki M."/>
            <person name="Aoki J."/>
            <person name="Arakawa T."/>
            <person name="Iida J."/>
            <person name="Imamura K."/>
            <person name="Itoh M."/>
            <person name="Kato T."/>
            <person name="Kawaji H."/>
            <person name="Kawagashira N."/>
            <person name="Kawashima T."/>
            <person name="Kojima M."/>
            <person name="Kondo S."/>
            <person name="Konno H."/>
            <person name="Nakano K."/>
            <person name="Ninomiya N."/>
            <person name="Nishio T."/>
            <person name="Okada M."/>
            <person name="Plessy C."/>
            <person name="Shibata K."/>
            <person name="Shiraki T."/>
            <person name="Suzuki S."/>
            <person name="Tagami M."/>
            <person name="Waki K."/>
            <person name="Watahiki A."/>
            <person name="Okamura-Oho Y."/>
            <person name="Suzuki H."/>
            <person name="Kawai J."/>
            <person name="Hayashizaki Y."/>
        </authorList>
    </citation>
    <scope>NUCLEOTIDE SEQUENCE [LARGE SCALE MRNA]</scope>
    <source>
        <strain>C57BL/6J</strain>
        <tissue>Hypothalamus</tissue>
    </source>
</reference>
<reference key="2">
    <citation type="journal article" date="2004" name="Genome Res.">
        <title>The status, quality, and expansion of the NIH full-length cDNA project: the Mammalian Gene Collection (MGC).</title>
        <authorList>
            <consortium name="The MGC Project Team"/>
        </authorList>
    </citation>
    <scope>NUCLEOTIDE SEQUENCE [LARGE SCALE MRNA]</scope>
    <source>
        <tissue>Brain</tissue>
    </source>
</reference>
<proteinExistence type="evidence at transcript level"/>
<accession>Q8CAA5</accession>
<dbReference type="EMBL" id="AK039197">
    <property type="protein sequence ID" value="BAC30275.1"/>
    <property type="molecule type" value="mRNA"/>
</dbReference>
<dbReference type="EMBL" id="BC116972">
    <property type="protein sequence ID" value="AAI16973.1"/>
    <property type="molecule type" value="mRNA"/>
</dbReference>
<dbReference type="EMBL" id="BC116974">
    <property type="protein sequence ID" value="AAI16975.1"/>
    <property type="molecule type" value="mRNA"/>
</dbReference>
<dbReference type="CCDS" id="CCDS15390.1"/>
<dbReference type="RefSeq" id="NP_808506.1">
    <property type="nucleotide sequence ID" value="NM_177838.3"/>
</dbReference>
<dbReference type="RefSeq" id="XP_017176771.1">
    <property type="nucleotide sequence ID" value="XM_017321282.3"/>
</dbReference>
<dbReference type="RefSeq" id="XP_017176772.1">
    <property type="nucleotide sequence ID" value="XM_017321283.3"/>
</dbReference>
<dbReference type="RefSeq" id="XP_017176773.1">
    <property type="nucleotide sequence ID" value="XM_017321284.3"/>
</dbReference>
<dbReference type="RefSeq" id="XP_036021817.1">
    <property type="nucleotide sequence ID" value="XM_036165924.1"/>
</dbReference>
<dbReference type="SMR" id="Q8CAA5"/>
<dbReference type="FunCoup" id="Q8CAA5">
    <property type="interactions" value="12"/>
</dbReference>
<dbReference type="STRING" id="10090.ENSMUSP00000015628"/>
<dbReference type="GlyGen" id="Q8CAA5">
    <property type="glycosylation" value="1 site"/>
</dbReference>
<dbReference type="iPTMnet" id="Q8CAA5"/>
<dbReference type="PhosphoSitePlus" id="Q8CAA5"/>
<dbReference type="PaxDb" id="10090-ENSMUSP00000015628"/>
<dbReference type="ProteomicsDB" id="271524"/>
<dbReference type="Antibodypedia" id="2490">
    <property type="antibodies" value="102 antibodies from 16 providers"/>
</dbReference>
<dbReference type="DNASU" id="329274"/>
<dbReference type="Ensembl" id="ENSMUST00000015628.4">
    <property type="protein sequence ID" value="ENSMUSP00000015628.4"/>
    <property type="gene ID" value="ENSMUSG00000015484.4"/>
</dbReference>
<dbReference type="GeneID" id="329274"/>
<dbReference type="KEGG" id="mmu:329274"/>
<dbReference type="UCSC" id="uc033fmn.1">
    <property type="organism name" value="mouse"/>
</dbReference>
<dbReference type="AGR" id="MGI:3618859"/>
<dbReference type="CTD" id="148753"/>
<dbReference type="MGI" id="MGI:3618859">
    <property type="gene designation" value="Fam163a"/>
</dbReference>
<dbReference type="VEuPathDB" id="HostDB:ENSMUSG00000015484"/>
<dbReference type="eggNOG" id="ENOG502S10V">
    <property type="taxonomic scope" value="Eukaryota"/>
</dbReference>
<dbReference type="GeneTree" id="ENSGT00940000159228"/>
<dbReference type="HOGENOM" id="CLU_138617_0_0_1"/>
<dbReference type="InParanoid" id="Q8CAA5"/>
<dbReference type="OMA" id="CGQPCGV"/>
<dbReference type="OrthoDB" id="9887724at2759"/>
<dbReference type="PhylomeDB" id="Q8CAA5"/>
<dbReference type="TreeFam" id="TF333084"/>
<dbReference type="BioGRID-ORCS" id="329274">
    <property type="hits" value="1 hit in 64 CRISPR screens"/>
</dbReference>
<dbReference type="ChiTaRS" id="Fam163a">
    <property type="organism name" value="mouse"/>
</dbReference>
<dbReference type="PRO" id="PR:Q8CAA5"/>
<dbReference type="Proteomes" id="UP000000589">
    <property type="component" value="Chromosome 1"/>
</dbReference>
<dbReference type="RNAct" id="Q8CAA5">
    <property type="molecule type" value="protein"/>
</dbReference>
<dbReference type="Bgee" id="ENSMUSG00000015484">
    <property type="expression patterns" value="Expressed in right kidney and 46 other cell types or tissues"/>
</dbReference>
<dbReference type="ExpressionAtlas" id="Q8CAA5">
    <property type="expression patterns" value="baseline and differential"/>
</dbReference>
<dbReference type="GO" id="GO:0016020">
    <property type="term" value="C:membrane"/>
    <property type="evidence" value="ECO:0007669"/>
    <property type="project" value="UniProtKB-SubCell"/>
</dbReference>
<dbReference type="InterPro" id="IPR029379">
    <property type="entry name" value="FAM163"/>
</dbReference>
<dbReference type="InterPro" id="IPR040281">
    <property type="entry name" value="FAM163A"/>
</dbReference>
<dbReference type="PANTHER" id="PTHR31914">
    <property type="entry name" value="PROTEIN FAM163A"/>
    <property type="match status" value="1"/>
</dbReference>
<dbReference type="PANTHER" id="PTHR31914:SF2">
    <property type="entry name" value="PROTEIN FAM163A"/>
    <property type="match status" value="1"/>
</dbReference>
<dbReference type="Pfam" id="PF15069">
    <property type="entry name" value="FAM163"/>
    <property type="match status" value="1"/>
</dbReference>
<name>F163A_MOUSE</name>
<organism>
    <name type="scientific">Mus musculus</name>
    <name type="common">Mouse</name>
    <dbReference type="NCBI Taxonomy" id="10090"/>
    <lineage>
        <taxon>Eukaryota</taxon>
        <taxon>Metazoa</taxon>
        <taxon>Chordata</taxon>
        <taxon>Craniata</taxon>
        <taxon>Vertebrata</taxon>
        <taxon>Euteleostomi</taxon>
        <taxon>Mammalia</taxon>
        <taxon>Eutheria</taxon>
        <taxon>Euarchontoglires</taxon>
        <taxon>Glires</taxon>
        <taxon>Rodentia</taxon>
        <taxon>Myomorpha</taxon>
        <taxon>Muroidea</taxon>
        <taxon>Muridae</taxon>
        <taxon>Murinae</taxon>
        <taxon>Mus</taxon>
        <taxon>Mus</taxon>
    </lineage>
</organism>
<evidence type="ECO:0000255" key="1"/>
<evidence type="ECO:0000305" key="2"/>
<comment type="subcellular location">
    <subcellularLocation>
        <location evidence="2">Membrane</location>
        <topology evidence="2">Single-pass membrane protein</topology>
    </subcellularLocation>
</comment>
<comment type="similarity">
    <text evidence="2">Belongs to the FAM163 family.</text>
</comment>
<feature type="chain" id="PRO_0000280257" description="Protein FAM163A">
    <location>
        <begin position="1"/>
        <end position="168"/>
    </location>
</feature>
<feature type="transmembrane region" description="Helical" evidence="1">
    <location>
        <begin position="6"/>
        <end position="26"/>
    </location>
</feature>
<keyword id="KW-0472">Membrane</keyword>
<keyword id="KW-1185">Reference proteome</keyword>
<keyword id="KW-0812">Transmembrane</keyword>
<keyword id="KW-1133">Transmembrane helix</keyword>
<gene>
    <name type="primary">Fam163a</name>
</gene>
<sequence>MTAGTVVITGGILATVILLCIIAVLCYCRLQYYCCKKGTDGEDAEEEEEEEEHGLSIHPRVPACNACSSHVLDGRGGLAPLTSESCSQPCGVASHCTTCSPYRTPFYIRTADMVPNGGGGERLSFAPTHYKEGGTPSLKLAAPQNYPVTWPSSGHEAFTNPRAISTDV</sequence>